<sequence length="344" mass="35921">MDFAISLPDPGLTAAIQHRIDRKTKPLGALGRIEALALQLGLIQQTAAPRIRQPHVLVFAGDHGAARAGISAFPQDVTWQMVENFLAGGAAVNVFCRQTELALTVIDSGVNHDFGRRDGLVDAKIAPGTANYIETPAMSAQQRDAALARGRELAHALAVNGCNLVGFGEMGIGNTASASLLTHCLTGIDLATVTGRGTGLDDAGLARKHRLLAQALARGGRPSDPLGALAEYGGFEIAMMAGAMLGAAEKRMTLLIDGFIVTSALLVAQAIAPAILPYCVFAHRSKEPGHTAQLAHLRVEPLMELDLRLGEGTGAALAFPLVQAAANFLNDMASFDSAGVDDRV</sequence>
<feature type="chain" id="PRO_1000078237" description="Nicotinate-nucleotide--dimethylbenzimidazole phosphoribosyltransferase">
    <location>
        <begin position="1"/>
        <end position="344"/>
    </location>
</feature>
<feature type="active site" description="Proton acceptor" evidence="1">
    <location>
        <position position="311"/>
    </location>
</feature>
<dbReference type="EC" id="2.4.2.21" evidence="1"/>
<dbReference type="EMBL" id="CR555306">
    <property type="protein sequence ID" value="CAI08400.1"/>
    <property type="molecule type" value="Genomic_DNA"/>
</dbReference>
<dbReference type="RefSeq" id="WP_011238087.1">
    <property type="nucleotide sequence ID" value="NC_006513.1"/>
</dbReference>
<dbReference type="SMR" id="Q5P2R4"/>
<dbReference type="STRING" id="76114.ebA4008"/>
<dbReference type="KEGG" id="eba:ebA4008"/>
<dbReference type="eggNOG" id="COG2038">
    <property type="taxonomic scope" value="Bacteria"/>
</dbReference>
<dbReference type="HOGENOM" id="CLU_002982_0_0_4"/>
<dbReference type="OrthoDB" id="9781491at2"/>
<dbReference type="UniPathway" id="UPA00061">
    <property type="reaction ID" value="UER00516"/>
</dbReference>
<dbReference type="Proteomes" id="UP000006552">
    <property type="component" value="Chromosome"/>
</dbReference>
<dbReference type="GO" id="GO:0008939">
    <property type="term" value="F:nicotinate-nucleotide-dimethylbenzimidazole phosphoribosyltransferase activity"/>
    <property type="evidence" value="ECO:0007669"/>
    <property type="project" value="UniProtKB-UniRule"/>
</dbReference>
<dbReference type="GO" id="GO:0009236">
    <property type="term" value="P:cobalamin biosynthetic process"/>
    <property type="evidence" value="ECO:0007669"/>
    <property type="project" value="UniProtKB-KW"/>
</dbReference>
<dbReference type="CDD" id="cd02439">
    <property type="entry name" value="DMB-PRT_CobT"/>
    <property type="match status" value="1"/>
</dbReference>
<dbReference type="FunFam" id="3.40.50.10210:FF:000001">
    <property type="entry name" value="Nicotinate-nucleotide--dimethylbenzimidazole phosphoribosyltransferase"/>
    <property type="match status" value="1"/>
</dbReference>
<dbReference type="Gene3D" id="1.10.1610.10">
    <property type="match status" value="1"/>
</dbReference>
<dbReference type="Gene3D" id="3.40.50.10210">
    <property type="match status" value="1"/>
</dbReference>
<dbReference type="HAMAP" id="MF_00230">
    <property type="entry name" value="CobT"/>
    <property type="match status" value="1"/>
</dbReference>
<dbReference type="InterPro" id="IPR003200">
    <property type="entry name" value="Nict_dMeBzImd_PRibTrfase"/>
</dbReference>
<dbReference type="InterPro" id="IPR017846">
    <property type="entry name" value="Nict_dMeBzImd_PRibTrfase_bact"/>
</dbReference>
<dbReference type="InterPro" id="IPR023195">
    <property type="entry name" value="Nict_dMeBzImd_PRibTrfase_N"/>
</dbReference>
<dbReference type="InterPro" id="IPR036087">
    <property type="entry name" value="Nict_dMeBzImd_PRibTrfase_sf"/>
</dbReference>
<dbReference type="NCBIfam" id="TIGR03160">
    <property type="entry name" value="cobT_DBIPRT"/>
    <property type="match status" value="1"/>
</dbReference>
<dbReference type="NCBIfam" id="NF000996">
    <property type="entry name" value="PRK00105.1"/>
    <property type="match status" value="1"/>
</dbReference>
<dbReference type="PANTHER" id="PTHR43463">
    <property type="entry name" value="NICOTINATE-NUCLEOTIDE--DIMETHYLBENZIMIDAZOLE PHOSPHORIBOSYLTRANSFERASE"/>
    <property type="match status" value="1"/>
</dbReference>
<dbReference type="PANTHER" id="PTHR43463:SF1">
    <property type="entry name" value="NICOTINATE-NUCLEOTIDE--DIMETHYLBENZIMIDAZOLE PHOSPHORIBOSYLTRANSFERASE"/>
    <property type="match status" value="1"/>
</dbReference>
<dbReference type="Pfam" id="PF02277">
    <property type="entry name" value="DBI_PRT"/>
    <property type="match status" value="1"/>
</dbReference>
<dbReference type="SUPFAM" id="SSF52733">
    <property type="entry name" value="Nicotinate mononucleotide:5,6-dimethylbenzimidazole phosphoribosyltransferase (CobT)"/>
    <property type="match status" value="1"/>
</dbReference>
<comment type="function">
    <text evidence="1">Catalyzes the synthesis of alpha-ribazole-5'-phosphate from nicotinate mononucleotide (NAMN) and 5,6-dimethylbenzimidazole (DMB).</text>
</comment>
<comment type="catalytic activity">
    <reaction evidence="1">
        <text>5,6-dimethylbenzimidazole + nicotinate beta-D-ribonucleotide = alpha-ribazole 5'-phosphate + nicotinate + H(+)</text>
        <dbReference type="Rhea" id="RHEA:11196"/>
        <dbReference type="ChEBI" id="CHEBI:15378"/>
        <dbReference type="ChEBI" id="CHEBI:15890"/>
        <dbReference type="ChEBI" id="CHEBI:32544"/>
        <dbReference type="ChEBI" id="CHEBI:57502"/>
        <dbReference type="ChEBI" id="CHEBI:57918"/>
        <dbReference type="EC" id="2.4.2.21"/>
    </reaction>
</comment>
<comment type="pathway">
    <text evidence="1">Nucleoside biosynthesis; alpha-ribazole biosynthesis; alpha-ribazole from 5,6-dimethylbenzimidazole: step 1/2.</text>
</comment>
<comment type="similarity">
    <text evidence="1">Belongs to the CobT family.</text>
</comment>
<proteinExistence type="inferred from homology"/>
<accession>Q5P2R4</accession>
<keyword id="KW-0169">Cobalamin biosynthesis</keyword>
<keyword id="KW-0328">Glycosyltransferase</keyword>
<keyword id="KW-1185">Reference proteome</keyword>
<keyword id="KW-0808">Transferase</keyword>
<evidence type="ECO:0000255" key="1">
    <source>
        <dbReference type="HAMAP-Rule" id="MF_00230"/>
    </source>
</evidence>
<gene>
    <name evidence="1" type="primary">cobT</name>
    <name type="ordered locus">AZOSEA22750</name>
    <name type="ORF">ebA4008</name>
</gene>
<reference key="1">
    <citation type="journal article" date="2005" name="Arch. Microbiol.">
        <title>The genome sequence of an anaerobic aromatic-degrading denitrifying bacterium, strain EbN1.</title>
        <authorList>
            <person name="Rabus R."/>
            <person name="Kube M."/>
            <person name="Heider J."/>
            <person name="Beck A."/>
            <person name="Heitmann K."/>
            <person name="Widdel F."/>
            <person name="Reinhardt R."/>
        </authorList>
    </citation>
    <scope>NUCLEOTIDE SEQUENCE [LARGE SCALE GENOMIC DNA]</scope>
    <source>
        <strain>DSM 19018 / LMG 30748 / EbN1</strain>
    </source>
</reference>
<protein>
    <recommendedName>
        <fullName evidence="1">Nicotinate-nucleotide--dimethylbenzimidazole phosphoribosyltransferase</fullName>
        <shortName evidence="1">NN:DBI PRT</shortName>
        <ecNumber evidence="1">2.4.2.21</ecNumber>
    </recommendedName>
    <alternativeName>
        <fullName evidence="1">N(1)-alpha-phosphoribosyltransferase</fullName>
    </alternativeName>
</protein>
<organism>
    <name type="scientific">Aromatoleum aromaticum (strain DSM 19018 / LMG 30748 / EbN1)</name>
    <name type="common">Azoarcus sp. (strain EbN1)</name>
    <dbReference type="NCBI Taxonomy" id="76114"/>
    <lineage>
        <taxon>Bacteria</taxon>
        <taxon>Pseudomonadati</taxon>
        <taxon>Pseudomonadota</taxon>
        <taxon>Betaproteobacteria</taxon>
        <taxon>Rhodocyclales</taxon>
        <taxon>Rhodocyclaceae</taxon>
        <taxon>Aromatoleum</taxon>
    </lineage>
</organism>
<name>COBT_AROAE</name>